<reference key="1">
    <citation type="journal article" date="2004" name="Nat. Genet.">
        <title>Complete sequencing and characterization of 21,243 full-length human cDNAs.</title>
        <authorList>
            <person name="Ota T."/>
            <person name="Suzuki Y."/>
            <person name="Nishikawa T."/>
            <person name="Otsuki T."/>
            <person name="Sugiyama T."/>
            <person name="Irie R."/>
            <person name="Wakamatsu A."/>
            <person name="Hayashi K."/>
            <person name="Sato H."/>
            <person name="Nagai K."/>
            <person name="Kimura K."/>
            <person name="Makita H."/>
            <person name="Sekine M."/>
            <person name="Obayashi M."/>
            <person name="Nishi T."/>
            <person name="Shibahara T."/>
            <person name="Tanaka T."/>
            <person name="Ishii S."/>
            <person name="Yamamoto J."/>
            <person name="Saito K."/>
            <person name="Kawai Y."/>
            <person name="Isono Y."/>
            <person name="Nakamura Y."/>
            <person name="Nagahari K."/>
            <person name="Murakami K."/>
            <person name="Yasuda T."/>
            <person name="Iwayanagi T."/>
            <person name="Wagatsuma M."/>
            <person name="Shiratori A."/>
            <person name="Sudo H."/>
            <person name="Hosoiri T."/>
            <person name="Kaku Y."/>
            <person name="Kodaira H."/>
            <person name="Kondo H."/>
            <person name="Sugawara M."/>
            <person name="Takahashi M."/>
            <person name="Kanda K."/>
            <person name="Yokoi T."/>
            <person name="Furuya T."/>
            <person name="Kikkawa E."/>
            <person name="Omura Y."/>
            <person name="Abe K."/>
            <person name="Kamihara K."/>
            <person name="Katsuta N."/>
            <person name="Sato K."/>
            <person name="Tanikawa M."/>
            <person name="Yamazaki M."/>
            <person name="Ninomiya K."/>
            <person name="Ishibashi T."/>
            <person name="Yamashita H."/>
            <person name="Murakawa K."/>
            <person name="Fujimori K."/>
            <person name="Tanai H."/>
            <person name="Kimata M."/>
            <person name="Watanabe M."/>
            <person name="Hiraoka S."/>
            <person name="Chiba Y."/>
            <person name="Ishida S."/>
            <person name="Ono Y."/>
            <person name="Takiguchi S."/>
            <person name="Watanabe S."/>
            <person name="Yosida M."/>
            <person name="Hotuta T."/>
            <person name="Kusano J."/>
            <person name="Kanehori K."/>
            <person name="Takahashi-Fujii A."/>
            <person name="Hara H."/>
            <person name="Tanase T.-O."/>
            <person name="Nomura Y."/>
            <person name="Togiya S."/>
            <person name="Komai F."/>
            <person name="Hara R."/>
            <person name="Takeuchi K."/>
            <person name="Arita M."/>
            <person name="Imose N."/>
            <person name="Musashino K."/>
            <person name="Yuuki H."/>
            <person name="Oshima A."/>
            <person name="Sasaki N."/>
            <person name="Aotsuka S."/>
            <person name="Yoshikawa Y."/>
            <person name="Matsunawa H."/>
            <person name="Ichihara T."/>
            <person name="Shiohata N."/>
            <person name="Sano S."/>
            <person name="Moriya S."/>
            <person name="Momiyama H."/>
            <person name="Satoh N."/>
            <person name="Takami S."/>
            <person name="Terashima Y."/>
            <person name="Suzuki O."/>
            <person name="Nakagawa S."/>
            <person name="Senoh A."/>
            <person name="Mizoguchi H."/>
            <person name="Goto Y."/>
            <person name="Shimizu F."/>
            <person name="Wakebe H."/>
            <person name="Hishigaki H."/>
            <person name="Watanabe T."/>
            <person name="Sugiyama A."/>
            <person name="Takemoto M."/>
            <person name="Kawakami B."/>
            <person name="Yamazaki M."/>
            <person name="Watanabe K."/>
            <person name="Kumagai A."/>
            <person name="Itakura S."/>
            <person name="Fukuzumi Y."/>
            <person name="Fujimori Y."/>
            <person name="Komiyama M."/>
            <person name="Tashiro H."/>
            <person name="Tanigami A."/>
            <person name="Fujiwara T."/>
            <person name="Ono T."/>
            <person name="Yamada K."/>
            <person name="Fujii Y."/>
            <person name="Ozaki K."/>
            <person name="Hirao M."/>
            <person name="Ohmori Y."/>
            <person name="Kawabata A."/>
            <person name="Hikiji T."/>
            <person name="Kobatake N."/>
            <person name="Inagaki H."/>
            <person name="Ikema Y."/>
            <person name="Okamoto S."/>
            <person name="Okitani R."/>
            <person name="Kawakami T."/>
            <person name="Noguchi S."/>
            <person name="Itoh T."/>
            <person name="Shigeta K."/>
            <person name="Senba T."/>
            <person name="Matsumura K."/>
            <person name="Nakajima Y."/>
            <person name="Mizuno T."/>
            <person name="Morinaga M."/>
            <person name="Sasaki M."/>
            <person name="Togashi T."/>
            <person name="Oyama M."/>
            <person name="Hata H."/>
            <person name="Watanabe M."/>
            <person name="Komatsu T."/>
            <person name="Mizushima-Sugano J."/>
            <person name="Satoh T."/>
            <person name="Shirai Y."/>
            <person name="Takahashi Y."/>
            <person name="Nakagawa K."/>
            <person name="Okumura K."/>
            <person name="Nagase T."/>
            <person name="Nomura N."/>
            <person name="Kikuchi H."/>
            <person name="Masuho Y."/>
            <person name="Yamashita R."/>
            <person name="Nakai K."/>
            <person name="Yada T."/>
            <person name="Nakamura Y."/>
            <person name="Ohara O."/>
            <person name="Isogai T."/>
            <person name="Sugano S."/>
        </authorList>
    </citation>
    <scope>NUCLEOTIDE SEQUENCE [LARGE SCALE MRNA]</scope>
    <source>
        <tissue>Brain</tissue>
    </source>
</reference>
<reference key="2">
    <citation type="submission" date="2005-09" db="EMBL/GenBank/DDBJ databases">
        <authorList>
            <person name="Mural R.J."/>
            <person name="Istrail S."/>
            <person name="Sutton G.G."/>
            <person name="Florea L."/>
            <person name="Halpern A.L."/>
            <person name="Mobarry C.M."/>
            <person name="Lippert R."/>
            <person name="Walenz B."/>
            <person name="Shatkay H."/>
            <person name="Dew I."/>
            <person name="Miller J.R."/>
            <person name="Flanigan M.J."/>
            <person name="Edwards N.J."/>
            <person name="Bolanos R."/>
            <person name="Fasulo D."/>
            <person name="Halldorsson B.V."/>
            <person name="Hannenhalli S."/>
            <person name="Turner R."/>
            <person name="Yooseph S."/>
            <person name="Lu F."/>
            <person name="Nusskern D.R."/>
            <person name="Shue B.C."/>
            <person name="Zheng X.H."/>
            <person name="Zhong F."/>
            <person name="Delcher A.L."/>
            <person name="Huson D.H."/>
            <person name="Kravitz S.A."/>
            <person name="Mouchard L."/>
            <person name="Reinert K."/>
            <person name="Remington K.A."/>
            <person name="Clark A.G."/>
            <person name="Waterman M.S."/>
            <person name="Eichler E.E."/>
            <person name="Adams M.D."/>
            <person name="Hunkapiller M.W."/>
            <person name="Myers E.W."/>
            <person name="Venter J.C."/>
        </authorList>
    </citation>
    <scope>NUCLEOTIDE SEQUENCE [LARGE SCALE GENOMIC DNA]</scope>
</reference>
<organism>
    <name type="scientific">Homo sapiens</name>
    <name type="common">Human</name>
    <dbReference type="NCBI Taxonomy" id="9606"/>
    <lineage>
        <taxon>Eukaryota</taxon>
        <taxon>Metazoa</taxon>
        <taxon>Chordata</taxon>
        <taxon>Craniata</taxon>
        <taxon>Vertebrata</taxon>
        <taxon>Euteleostomi</taxon>
        <taxon>Mammalia</taxon>
        <taxon>Eutheria</taxon>
        <taxon>Euarchontoglires</taxon>
        <taxon>Primates</taxon>
        <taxon>Haplorrhini</taxon>
        <taxon>Catarrhini</taxon>
        <taxon>Hominidae</taxon>
        <taxon>Homo</taxon>
    </lineage>
</organism>
<proteinExistence type="evidence at transcript level"/>
<feature type="chain" id="PRO_0000335685" description="Putative uncharacterized protein FLJ45177">
    <location>
        <begin position="1"/>
        <end position="163"/>
    </location>
</feature>
<accession>Q6ZSV7</accession>
<name>YF010_HUMAN</name>
<keyword id="KW-1185">Reference proteome</keyword>
<sequence length="163" mass="16907">MAFGEPPSGHSTRHRTLHGLSFHTAMGMAWSLHYQGQGGTLCLVGVSTPSHDKAVLQGLPHFSVNLGVQPSALAGRRGDASCPSSWRSADPTVSPNLGAPGGPNAIDALHGEQLGLFLRTKMGRDPKDVHGLTPALCGPCLAGLPSSHSPQFSCNTAPLKMLS</sequence>
<protein>
    <recommendedName>
        <fullName>Putative uncharacterized protein FLJ45177</fullName>
    </recommendedName>
</protein>
<dbReference type="EMBL" id="AK123853">
    <property type="protein sequence ID" value="BAC85709.1"/>
    <property type="molecule type" value="mRNA"/>
</dbReference>
<dbReference type="EMBL" id="AK127120">
    <property type="protein sequence ID" value="BAC86839.1"/>
    <property type="molecule type" value="mRNA"/>
</dbReference>
<dbReference type="EMBL" id="CH471051">
    <property type="protein sequence ID" value="EAW47492.1"/>
    <property type="molecule type" value="Genomic_DNA"/>
</dbReference>
<dbReference type="BioMuta" id="-"/>
<dbReference type="MassIVE" id="Q6ZSV7"/>
<dbReference type="AGR" id="HGNC:53571"/>
<dbReference type="neXtProt" id="NX_Q6ZSV7"/>
<dbReference type="InParanoid" id="Q6ZSV7"/>
<dbReference type="PAN-GO" id="Q6ZSV7">
    <property type="GO annotations" value="0 GO annotations based on evolutionary models"/>
</dbReference>
<dbReference type="PhylomeDB" id="Q6ZSV7"/>
<dbReference type="Pharos" id="Q6ZSV7">
    <property type="development level" value="Tdark"/>
</dbReference>
<dbReference type="Proteomes" id="UP000005640">
    <property type="component" value="Unplaced"/>
</dbReference>
<dbReference type="RNAct" id="Q6ZSV7">
    <property type="molecule type" value="protein"/>
</dbReference>